<sequence length="154" mass="15976">MVKAVAVIRGDSKVSGTVTFEQANENTPTTISWNITGHDANAERGFHVHQFGDNTNGCTSAGPHFNPYGKTHGAPEDDERHVGDLGNFKTDAEGNAVGSKQDKLVKLIGAESVLGRTLVVHAGTDDLGRGGNEESKKTGNAGPRPACGVIGIAA</sequence>
<proteinExistence type="evidence at protein level"/>
<accession>P85978</accession>
<protein>
    <recommendedName>
        <fullName evidence="7">Superoxide dismutase [Cu-Zn]</fullName>
        <ecNumber evidence="6">1.15.1.1</ecNumber>
    </recommendedName>
</protein>
<feature type="initiator methionine" description="Removed" evidence="6">
    <location>
        <position position="1"/>
    </location>
</feature>
<feature type="chain" id="PRO_0000355101" description="Superoxide dismutase [Cu-Zn]" evidence="6">
    <location>
        <begin position="2"/>
        <end position="154"/>
    </location>
</feature>
<feature type="region of interest" description="Disordered" evidence="5">
    <location>
        <begin position="125"/>
        <end position="147"/>
    </location>
</feature>
<feature type="compositionally biased region" description="Basic and acidic residues" evidence="5">
    <location>
        <begin position="125"/>
        <end position="137"/>
    </location>
</feature>
<feature type="binding site" evidence="2">
    <location>
        <position position="47"/>
    </location>
    <ligand>
        <name>Cu cation</name>
        <dbReference type="ChEBI" id="CHEBI:23378"/>
        <note>catalytic</note>
    </ligand>
</feature>
<feature type="binding site" evidence="2">
    <location>
        <position position="49"/>
    </location>
    <ligand>
        <name>Cu cation</name>
        <dbReference type="ChEBI" id="CHEBI:23378"/>
        <note>catalytic</note>
    </ligand>
</feature>
<feature type="binding site" evidence="2">
    <location>
        <position position="64"/>
    </location>
    <ligand>
        <name>Cu cation</name>
        <dbReference type="ChEBI" id="CHEBI:23378"/>
        <note>catalytic</note>
    </ligand>
</feature>
<feature type="binding site" evidence="2">
    <location>
        <position position="64"/>
    </location>
    <ligand>
        <name>Zn(2+)</name>
        <dbReference type="ChEBI" id="CHEBI:29105"/>
        <note>structural</note>
    </ligand>
</feature>
<feature type="binding site" evidence="2">
    <location>
        <position position="72"/>
    </location>
    <ligand>
        <name>Zn(2+)</name>
        <dbReference type="ChEBI" id="CHEBI:29105"/>
        <note>structural</note>
    </ligand>
</feature>
<feature type="binding site" evidence="2">
    <location>
        <position position="81"/>
    </location>
    <ligand>
        <name>Zn(2+)</name>
        <dbReference type="ChEBI" id="CHEBI:29105"/>
        <note>structural</note>
    </ligand>
</feature>
<feature type="binding site" evidence="2">
    <location>
        <position position="84"/>
    </location>
    <ligand>
        <name>Zn(2+)</name>
        <dbReference type="ChEBI" id="CHEBI:29105"/>
        <note>structural</note>
    </ligand>
</feature>
<feature type="binding site" evidence="2">
    <location>
        <position position="121"/>
    </location>
    <ligand>
        <name>Cu cation</name>
        <dbReference type="ChEBI" id="CHEBI:23378"/>
        <note>catalytic</note>
    </ligand>
</feature>
<feature type="binding site" evidence="2">
    <location>
        <position position="144"/>
    </location>
    <ligand>
        <name>substrate</name>
    </ligand>
</feature>
<feature type="disulfide bond" evidence="1">
    <location>
        <begin position="58"/>
        <end position="147"/>
    </location>
</feature>
<comment type="function">
    <text evidence="1">Destroys radicals which are normally produced within the cells and which are toxic to biological systems.</text>
</comment>
<comment type="catalytic activity">
    <reaction evidence="6">
        <text>2 superoxide + 2 H(+) = H2O2 + O2</text>
        <dbReference type="Rhea" id="RHEA:20696"/>
        <dbReference type="ChEBI" id="CHEBI:15378"/>
        <dbReference type="ChEBI" id="CHEBI:15379"/>
        <dbReference type="ChEBI" id="CHEBI:16240"/>
        <dbReference type="ChEBI" id="CHEBI:18421"/>
        <dbReference type="EC" id="1.15.1.1"/>
    </reaction>
</comment>
<comment type="cofactor">
    <cofactor evidence="1">
        <name>Cu cation</name>
        <dbReference type="ChEBI" id="CHEBI:23378"/>
    </cofactor>
    <text evidence="1">Binds 1 copper ion per subunit.</text>
</comment>
<comment type="cofactor">
    <cofactor evidence="1">
        <name>Zn(2+)</name>
        <dbReference type="ChEBI" id="CHEBI:29105"/>
    </cofactor>
    <text evidence="1">Binds 1 zinc ion per subunit.</text>
</comment>
<comment type="biophysicochemical properties">
    <phDependence>
        <text evidence="6">Retains over 90% of its activity between pH 5.6 and 7.0. Retains 85% of its activity at pH 4.0 and 60% of its activity at pH 12.0.</text>
    </phDependence>
    <temperatureDependence>
        <text evidence="6">Full activity is retained between 25 and 45 degrees Celsius.</text>
    </temperatureDependence>
</comment>
<comment type="subunit">
    <text evidence="6">Homodimer.</text>
</comment>
<comment type="subcellular location">
    <subcellularLocation>
        <location evidence="1">Cytoplasm</location>
    </subcellularLocation>
</comment>
<comment type="mass spectrometry" mass="15821.0" method="MALDI" evidence="6"/>
<comment type="mass spectrometry" mass="15824.0" method="Electrospray" evidence="6"/>
<comment type="similarity">
    <text evidence="4">Belongs to the Cu-Zn superoxide dismutase family.</text>
</comment>
<reference evidence="8" key="1">
    <citation type="journal article" date="2008" name="Spectrochim. Acta A Mol. Biomol. Spectrosc.">
        <title>Biochemical properties of Cu/Zn-superoxide dismutase from fungal strain Aspergillus niger 26.</title>
        <authorList>
            <person name="Dolashki A."/>
            <person name="Abrashev R."/>
            <person name="Stevanovic S."/>
            <person name="Stefanova L."/>
            <person name="Ali S.A."/>
            <person name="Velkova L."/>
            <person name="Hristova R."/>
            <person name="Angelova M."/>
            <person name="Voelter W."/>
            <person name="Devreese B."/>
            <person name="Van Beeumen J."/>
            <person name="Dolashka-Angelova P."/>
        </authorList>
    </citation>
    <scope>PROTEIN SEQUENCE OF 2-154</scope>
    <scope>CATALYTIC ACTIVITY</scope>
    <scope>BIOPHYSICOCHEMICAL PROPERTIES</scope>
    <scope>SUBUNIT</scope>
    <scope>MASS SPECTROMETRY</scope>
    <source>
        <strain evidence="6">26</strain>
    </source>
</reference>
<evidence type="ECO:0000250" key="1">
    <source>
        <dbReference type="UniProtKB" id="P00442"/>
    </source>
</evidence>
<evidence type="ECO:0000250" key="2">
    <source>
        <dbReference type="UniProtKB" id="P00445"/>
    </source>
</evidence>
<evidence type="ECO:0000250" key="3">
    <source>
        <dbReference type="UniProtKB" id="Q9Y8D9"/>
    </source>
</evidence>
<evidence type="ECO:0000255" key="4"/>
<evidence type="ECO:0000256" key="5">
    <source>
        <dbReference type="SAM" id="MobiDB-lite"/>
    </source>
</evidence>
<evidence type="ECO:0000269" key="6">
    <source>
    </source>
</evidence>
<evidence type="ECO:0000303" key="7">
    <source>
    </source>
</evidence>
<evidence type="ECO:0000305" key="8"/>
<name>SODC_ASPNG</name>
<dbReference type="EC" id="1.15.1.1" evidence="6"/>
<dbReference type="SMR" id="P85978"/>
<dbReference type="PaxDb" id="5061-CADANGAP00005537"/>
<dbReference type="VEuPathDB" id="FungiDB:An07g03770"/>
<dbReference type="VEuPathDB" id="FungiDB:ASPNIDRAFT2_1143951"/>
<dbReference type="VEuPathDB" id="FungiDB:ATCC64974_45950"/>
<dbReference type="VEuPathDB" id="FungiDB:M747DRAFT_138609"/>
<dbReference type="eggNOG" id="KOG0441">
    <property type="taxonomic scope" value="Eukaryota"/>
</dbReference>
<dbReference type="GO" id="GO:0005737">
    <property type="term" value="C:cytoplasm"/>
    <property type="evidence" value="ECO:0007669"/>
    <property type="project" value="UniProtKB-SubCell"/>
</dbReference>
<dbReference type="GO" id="GO:0005507">
    <property type="term" value="F:copper ion binding"/>
    <property type="evidence" value="ECO:0007669"/>
    <property type="project" value="InterPro"/>
</dbReference>
<dbReference type="GO" id="GO:0004784">
    <property type="term" value="F:superoxide dismutase activity"/>
    <property type="evidence" value="ECO:0007669"/>
    <property type="project" value="UniProtKB-EC"/>
</dbReference>
<dbReference type="CDD" id="cd00305">
    <property type="entry name" value="Cu-Zn_Superoxide_Dismutase"/>
    <property type="match status" value="1"/>
</dbReference>
<dbReference type="FunFam" id="2.60.40.200:FF:000001">
    <property type="entry name" value="Superoxide dismutase [Cu-Zn]"/>
    <property type="match status" value="1"/>
</dbReference>
<dbReference type="Gene3D" id="2.60.40.200">
    <property type="entry name" value="Superoxide dismutase, copper/zinc binding domain"/>
    <property type="match status" value="1"/>
</dbReference>
<dbReference type="InterPro" id="IPR036423">
    <property type="entry name" value="SOD-like_Cu/Zn_dom_sf"/>
</dbReference>
<dbReference type="InterPro" id="IPR024134">
    <property type="entry name" value="SOD_Cu/Zn_/chaperone"/>
</dbReference>
<dbReference type="InterPro" id="IPR018152">
    <property type="entry name" value="SOD_Cu/Zn_BS"/>
</dbReference>
<dbReference type="InterPro" id="IPR001424">
    <property type="entry name" value="SOD_Cu_Zn_dom"/>
</dbReference>
<dbReference type="PANTHER" id="PTHR10003">
    <property type="entry name" value="SUPEROXIDE DISMUTASE CU-ZN -RELATED"/>
    <property type="match status" value="1"/>
</dbReference>
<dbReference type="Pfam" id="PF00080">
    <property type="entry name" value="Sod_Cu"/>
    <property type="match status" value="1"/>
</dbReference>
<dbReference type="PRINTS" id="PR00068">
    <property type="entry name" value="CUZNDISMTASE"/>
</dbReference>
<dbReference type="SUPFAM" id="SSF49329">
    <property type="entry name" value="Cu,Zn superoxide dismutase-like"/>
    <property type="match status" value="1"/>
</dbReference>
<dbReference type="PROSITE" id="PS00087">
    <property type="entry name" value="SOD_CU_ZN_1"/>
    <property type="match status" value="1"/>
</dbReference>
<dbReference type="PROSITE" id="PS00332">
    <property type="entry name" value="SOD_CU_ZN_2"/>
    <property type="match status" value="1"/>
</dbReference>
<gene>
    <name evidence="3" type="primary">sodC</name>
</gene>
<keyword id="KW-0049">Antioxidant</keyword>
<keyword id="KW-0186">Copper</keyword>
<keyword id="KW-0963">Cytoplasm</keyword>
<keyword id="KW-0903">Direct protein sequencing</keyword>
<keyword id="KW-1015">Disulfide bond</keyword>
<keyword id="KW-0479">Metal-binding</keyword>
<keyword id="KW-0560">Oxidoreductase</keyword>
<keyword id="KW-0862">Zinc</keyword>
<organism>
    <name type="scientific">Aspergillus niger</name>
    <dbReference type="NCBI Taxonomy" id="5061"/>
    <lineage>
        <taxon>Eukaryota</taxon>
        <taxon>Fungi</taxon>
        <taxon>Dikarya</taxon>
        <taxon>Ascomycota</taxon>
        <taxon>Pezizomycotina</taxon>
        <taxon>Eurotiomycetes</taxon>
        <taxon>Eurotiomycetidae</taxon>
        <taxon>Eurotiales</taxon>
        <taxon>Aspergillaceae</taxon>
        <taxon>Aspergillus</taxon>
        <taxon>Aspergillus subgen. Circumdati</taxon>
    </lineage>
</organism>